<evidence type="ECO:0000250" key="1">
    <source>
        <dbReference type="UniProtKB" id="P68137"/>
    </source>
</evidence>
<evidence type="ECO:0000305" key="2"/>
<sequence length="278" mass="31294">WDDMEKIWHHTFYNELRVAPEELPVLLTEAPLNPKANREKMTQIMFETFNMPAMYVAIQAVLSLYASGRTTGIVMDSGDGVSHGVPVYEGYALPHAIVRLDLAGRELTNYLMKILTERGYSFTTTAEREIVRDIKEKLCYEALDFEQEMSTAAASTSLEKSYELPDGQVITIGNERFRCPEALFQPSFLGMEACGIHETTYNSIMKCDVDIRKDLYANTVMSGGTTMYPGIADRMQKEITALAPSTIKIKIIAPPERKYSVWIGGSILASLSTFQQMW</sequence>
<proteinExistence type="evidence at transcript level"/>
<organism>
    <name type="scientific">Calanus finmarchicus</name>
    <name type="common">Calanus tonsus</name>
    <dbReference type="NCBI Taxonomy" id="6837"/>
    <lineage>
        <taxon>Eukaryota</taxon>
        <taxon>Metazoa</taxon>
        <taxon>Ecdysozoa</taxon>
        <taxon>Arthropoda</taxon>
        <taxon>Crustacea</taxon>
        <taxon>Multicrustacea</taxon>
        <taxon>Hexanauplia</taxon>
        <taxon>Copepoda</taxon>
        <taxon>Calanoida</taxon>
        <taxon>Calanidae</taxon>
        <taxon>Calanus</taxon>
    </lineage>
</organism>
<feature type="chain" id="PRO_0000088902" description="Actin">
    <location>
        <begin position="1" status="less than"/>
        <end position="278" status="greater than"/>
    </location>
</feature>
<feature type="non-terminal residue">
    <location>
        <position position="1"/>
    </location>
</feature>
<feature type="non-terminal residue">
    <location>
        <position position="278"/>
    </location>
</feature>
<dbReference type="EC" id="3.6.4.-" evidence="1"/>
<dbReference type="EMBL" id="U21222">
    <property type="protein sequence ID" value="AAA85284.1"/>
    <property type="molecule type" value="mRNA"/>
</dbReference>
<dbReference type="SMR" id="Q92192"/>
<dbReference type="GO" id="GO:0005737">
    <property type="term" value="C:cytoplasm"/>
    <property type="evidence" value="ECO:0007669"/>
    <property type="project" value="UniProtKB-KW"/>
</dbReference>
<dbReference type="GO" id="GO:0005856">
    <property type="term" value="C:cytoskeleton"/>
    <property type="evidence" value="ECO:0007669"/>
    <property type="project" value="UniProtKB-SubCell"/>
</dbReference>
<dbReference type="GO" id="GO:0005524">
    <property type="term" value="F:ATP binding"/>
    <property type="evidence" value="ECO:0007669"/>
    <property type="project" value="UniProtKB-KW"/>
</dbReference>
<dbReference type="GO" id="GO:0016787">
    <property type="term" value="F:hydrolase activity"/>
    <property type="evidence" value="ECO:0007669"/>
    <property type="project" value="UniProtKB-KW"/>
</dbReference>
<dbReference type="FunFam" id="3.30.420.40:FF:000626">
    <property type="entry name" value="Actin 12"/>
    <property type="match status" value="1"/>
</dbReference>
<dbReference type="FunFam" id="3.30.420.40:FF:000131">
    <property type="entry name" value="Actin, alpha skeletal muscle"/>
    <property type="match status" value="1"/>
</dbReference>
<dbReference type="FunFam" id="3.30.420.40:FF:000205">
    <property type="entry name" value="Actin, alpha skeletal muscle"/>
    <property type="match status" value="1"/>
</dbReference>
<dbReference type="FunFam" id="3.90.640.10:FF:000047">
    <property type="entry name" value="Actin, alpha skeletal muscle"/>
    <property type="match status" value="1"/>
</dbReference>
<dbReference type="Gene3D" id="3.30.420.40">
    <property type="match status" value="2"/>
</dbReference>
<dbReference type="Gene3D" id="3.90.640.10">
    <property type="entry name" value="Actin, Chain A, domain 4"/>
    <property type="match status" value="1"/>
</dbReference>
<dbReference type="InterPro" id="IPR004000">
    <property type="entry name" value="Actin"/>
</dbReference>
<dbReference type="InterPro" id="IPR020902">
    <property type="entry name" value="Actin/actin-like_CS"/>
</dbReference>
<dbReference type="InterPro" id="IPR043129">
    <property type="entry name" value="ATPase_NBD"/>
</dbReference>
<dbReference type="PANTHER" id="PTHR11937">
    <property type="entry name" value="ACTIN"/>
    <property type="match status" value="1"/>
</dbReference>
<dbReference type="Pfam" id="PF00022">
    <property type="entry name" value="Actin"/>
    <property type="match status" value="1"/>
</dbReference>
<dbReference type="PRINTS" id="PR00190">
    <property type="entry name" value="ACTIN"/>
</dbReference>
<dbReference type="SMART" id="SM00268">
    <property type="entry name" value="ACTIN"/>
    <property type="match status" value="1"/>
</dbReference>
<dbReference type="SUPFAM" id="SSF53067">
    <property type="entry name" value="Actin-like ATPase domain"/>
    <property type="match status" value="2"/>
</dbReference>
<dbReference type="PROSITE" id="PS01132">
    <property type="entry name" value="ACTINS_ACT_LIKE"/>
    <property type="match status" value="1"/>
</dbReference>
<protein>
    <recommendedName>
        <fullName>Actin</fullName>
        <ecNumber evidence="1">3.6.4.-</ecNumber>
    </recommendedName>
</protein>
<keyword id="KW-0067">ATP-binding</keyword>
<keyword id="KW-0963">Cytoplasm</keyword>
<keyword id="KW-0206">Cytoskeleton</keyword>
<keyword id="KW-0378">Hydrolase</keyword>
<keyword id="KW-0547">Nucleotide-binding</keyword>
<comment type="function">
    <text>Actins are highly conserved proteins that are involved in various types of cell motility and are ubiquitously expressed in all eukaryotic cells.</text>
</comment>
<comment type="catalytic activity">
    <reaction evidence="1">
        <text>ATP + H2O = ADP + phosphate + H(+)</text>
        <dbReference type="Rhea" id="RHEA:13065"/>
        <dbReference type="ChEBI" id="CHEBI:15377"/>
        <dbReference type="ChEBI" id="CHEBI:15378"/>
        <dbReference type="ChEBI" id="CHEBI:30616"/>
        <dbReference type="ChEBI" id="CHEBI:43474"/>
        <dbReference type="ChEBI" id="CHEBI:456216"/>
    </reaction>
</comment>
<comment type="subcellular location">
    <subcellularLocation>
        <location>Cytoplasm</location>
        <location>Cytoskeleton</location>
    </subcellularLocation>
</comment>
<comment type="similarity">
    <text evidence="2">Belongs to the actin family.</text>
</comment>
<name>ACT_CALFI</name>
<accession>Q92192</accession>
<reference key="1">
    <citation type="journal article" date="1995" name="Mol. Mar. Biol. Biotechnol.">
        <title>Nuclear genes from the copepod Calanus finmarchicus.</title>
        <authorList>
            <person name="Crawford D.L."/>
        </authorList>
    </citation>
    <scope>NUCLEOTIDE SEQUENCE [MRNA]</scope>
</reference>